<comment type="subcellular location">
    <subcellularLocation>
        <location evidence="2">Membrane</location>
        <topology evidence="2">Multi-pass membrane protein</topology>
    </subcellularLocation>
</comment>
<comment type="similarity">
    <text evidence="2">Belongs to the major facilitator superfamily. CAR1 family.</text>
</comment>
<comment type="caution">
    <text evidence="2">Could be the product of a pseudogene. Corresponds to the truncated C-ter of membrane transporter.</text>
</comment>
<organism>
    <name type="scientific">Schizosaccharomyces pombe (strain 972 / ATCC 24843)</name>
    <name type="common">Fission yeast</name>
    <dbReference type="NCBI Taxonomy" id="284812"/>
    <lineage>
        <taxon>Eukaryota</taxon>
        <taxon>Fungi</taxon>
        <taxon>Dikarya</taxon>
        <taxon>Ascomycota</taxon>
        <taxon>Taphrinomycotina</taxon>
        <taxon>Schizosaccharomycetes</taxon>
        <taxon>Schizosaccharomycetales</taxon>
        <taxon>Schizosaccharomycetaceae</taxon>
        <taxon>Schizosaccharomyces</taxon>
    </lineage>
</organism>
<keyword id="KW-0472">Membrane</keyword>
<keyword id="KW-1185">Reference proteome</keyword>
<keyword id="KW-0812">Transmembrane</keyword>
<keyword id="KW-1133">Transmembrane helix</keyword>
<keyword id="KW-0813">Transport</keyword>
<dbReference type="EMBL" id="CU329670">
    <property type="protein sequence ID" value="CAO77633.2"/>
    <property type="molecule type" value="Genomic_DNA"/>
</dbReference>
<dbReference type="RefSeq" id="XP_004001760.1">
    <property type="nucleotide sequence ID" value="XM_004001711.1"/>
</dbReference>
<dbReference type="BioGRID" id="280462">
    <property type="interactions" value="2"/>
</dbReference>
<dbReference type="EnsemblFungi" id="SPAC977.04.1">
    <property type="protein sequence ID" value="SPAC977.04.1:pep"/>
    <property type="gene ID" value="SPAC977.04"/>
</dbReference>
<dbReference type="PomBase" id="SPAC977.04"/>
<dbReference type="VEuPathDB" id="FungiDB:SPAC977.04"/>
<dbReference type="eggNOG" id="KOG0255">
    <property type="taxonomic scope" value="Eukaryota"/>
</dbReference>
<dbReference type="HOGENOM" id="CLU_008455_5_2_1"/>
<dbReference type="InParanoid" id="G2TRN8"/>
<dbReference type="Proteomes" id="UP000002485">
    <property type="component" value="Chromosome I"/>
</dbReference>
<dbReference type="GO" id="GO:0016020">
    <property type="term" value="C:membrane"/>
    <property type="evidence" value="ECO:0007669"/>
    <property type="project" value="UniProtKB-SubCell"/>
</dbReference>
<dbReference type="Gene3D" id="1.20.1250.20">
    <property type="entry name" value="MFS general substrate transporter like domains"/>
    <property type="match status" value="1"/>
</dbReference>
<dbReference type="InterPro" id="IPR036259">
    <property type="entry name" value="MFS_trans_sf"/>
</dbReference>
<dbReference type="PANTHER" id="PTHR23502">
    <property type="entry name" value="MAJOR FACILITATOR SUPERFAMILY"/>
    <property type="match status" value="1"/>
</dbReference>
<dbReference type="PANTHER" id="PTHR23502:SF189">
    <property type="entry name" value="MEMBRANE TRANSPORTER"/>
    <property type="match status" value="1"/>
</dbReference>
<dbReference type="SUPFAM" id="SSF103473">
    <property type="entry name" value="MFS general substrate transporter"/>
    <property type="match status" value="1"/>
</dbReference>
<reference key="1">
    <citation type="journal article" date="2002" name="Nature">
        <title>The genome sequence of Schizosaccharomyces pombe.</title>
        <authorList>
            <person name="Wood V."/>
            <person name="Gwilliam R."/>
            <person name="Rajandream M.A."/>
            <person name="Lyne M.H."/>
            <person name="Lyne R."/>
            <person name="Stewart A."/>
            <person name="Sgouros J.G."/>
            <person name="Peat N."/>
            <person name="Hayles J."/>
            <person name="Baker S.G."/>
            <person name="Basham D."/>
            <person name="Bowman S."/>
            <person name="Brooks K."/>
            <person name="Brown D."/>
            <person name="Brown S."/>
            <person name="Chillingworth T."/>
            <person name="Churcher C.M."/>
            <person name="Collins M."/>
            <person name="Connor R."/>
            <person name="Cronin A."/>
            <person name="Davis P."/>
            <person name="Feltwell T."/>
            <person name="Fraser A."/>
            <person name="Gentles S."/>
            <person name="Goble A."/>
            <person name="Hamlin N."/>
            <person name="Harris D.E."/>
            <person name="Hidalgo J."/>
            <person name="Hodgson G."/>
            <person name="Holroyd S."/>
            <person name="Hornsby T."/>
            <person name="Howarth S."/>
            <person name="Huckle E.J."/>
            <person name="Hunt S."/>
            <person name="Jagels K."/>
            <person name="James K.D."/>
            <person name="Jones L."/>
            <person name="Jones M."/>
            <person name="Leather S."/>
            <person name="McDonald S."/>
            <person name="McLean J."/>
            <person name="Mooney P."/>
            <person name="Moule S."/>
            <person name="Mungall K.L."/>
            <person name="Murphy L.D."/>
            <person name="Niblett D."/>
            <person name="Odell C."/>
            <person name="Oliver K."/>
            <person name="O'Neil S."/>
            <person name="Pearson D."/>
            <person name="Quail M.A."/>
            <person name="Rabbinowitsch E."/>
            <person name="Rutherford K.M."/>
            <person name="Rutter S."/>
            <person name="Saunders D."/>
            <person name="Seeger K."/>
            <person name="Sharp S."/>
            <person name="Skelton J."/>
            <person name="Simmonds M.N."/>
            <person name="Squares R."/>
            <person name="Squares S."/>
            <person name="Stevens K."/>
            <person name="Taylor K."/>
            <person name="Taylor R.G."/>
            <person name="Tivey A."/>
            <person name="Walsh S.V."/>
            <person name="Warren T."/>
            <person name="Whitehead S."/>
            <person name="Woodward J.R."/>
            <person name="Volckaert G."/>
            <person name="Aert R."/>
            <person name="Robben J."/>
            <person name="Grymonprez B."/>
            <person name="Weltjens I."/>
            <person name="Vanstreels E."/>
            <person name="Rieger M."/>
            <person name="Schaefer M."/>
            <person name="Mueller-Auer S."/>
            <person name="Gabel C."/>
            <person name="Fuchs M."/>
            <person name="Duesterhoeft A."/>
            <person name="Fritzc C."/>
            <person name="Holzer E."/>
            <person name="Moestl D."/>
            <person name="Hilbert H."/>
            <person name="Borzym K."/>
            <person name="Langer I."/>
            <person name="Beck A."/>
            <person name="Lehrach H."/>
            <person name="Reinhardt R."/>
            <person name="Pohl T.M."/>
            <person name="Eger P."/>
            <person name="Zimmermann W."/>
            <person name="Wedler H."/>
            <person name="Wambutt R."/>
            <person name="Purnelle B."/>
            <person name="Goffeau A."/>
            <person name="Cadieu E."/>
            <person name="Dreano S."/>
            <person name="Gloux S."/>
            <person name="Lelaure V."/>
            <person name="Mottier S."/>
            <person name="Galibert F."/>
            <person name="Aves S.J."/>
            <person name="Xiang Z."/>
            <person name="Hunt C."/>
            <person name="Moore K."/>
            <person name="Hurst S.M."/>
            <person name="Lucas M."/>
            <person name="Rochet M."/>
            <person name="Gaillardin C."/>
            <person name="Tallada V.A."/>
            <person name="Garzon A."/>
            <person name="Thode G."/>
            <person name="Daga R.R."/>
            <person name="Cruzado L."/>
            <person name="Jimenez J."/>
            <person name="Sanchez M."/>
            <person name="del Rey F."/>
            <person name="Benito J."/>
            <person name="Dominguez A."/>
            <person name="Revuelta J.L."/>
            <person name="Moreno S."/>
            <person name="Armstrong J."/>
            <person name="Forsburg S.L."/>
            <person name="Cerutti L."/>
            <person name="Lowe T."/>
            <person name="McCombie W.R."/>
            <person name="Paulsen I."/>
            <person name="Potashkin J."/>
            <person name="Shpakovski G.V."/>
            <person name="Ussery D."/>
            <person name="Barrell B.G."/>
            <person name="Nurse P."/>
        </authorList>
    </citation>
    <scope>NUCLEOTIDE SEQUENCE [LARGE SCALE GENOMIC DNA]</scope>
    <source>
        <strain>972 / ATCC 24843</strain>
    </source>
</reference>
<reference key="2">
    <citation type="journal article" date="2011" name="Science">
        <title>Comparative functional genomics of the fission yeasts.</title>
        <authorList>
            <person name="Rhind N."/>
            <person name="Chen Z."/>
            <person name="Yassour M."/>
            <person name="Thompson D.A."/>
            <person name="Haas B.J."/>
            <person name="Habib N."/>
            <person name="Wapinski I."/>
            <person name="Roy S."/>
            <person name="Lin M.F."/>
            <person name="Heiman D.I."/>
            <person name="Young S.K."/>
            <person name="Furuya K."/>
            <person name="Guo Y."/>
            <person name="Pidoux A."/>
            <person name="Chen H.M."/>
            <person name="Robbertse B."/>
            <person name="Goldberg J.M."/>
            <person name="Aoki K."/>
            <person name="Bayne E.H."/>
            <person name="Berlin A.M."/>
            <person name="Desjardins C.A."/>
            <person name="Dobbs E."/>
            <person name="Dukaj L."/>
            <person name="Fan L."/>
            <person name="FitzGerald M.G."/>
            <person name="French C."/>
            <person name="Gujja S."/>
            <person name="Hansen K."/>
            <person name="Keifenheim D."/>
            <person name="Levin J.Z."/>
            <person name="Mosher R.A."/>
            <person name="Mueller C.A."/>
            <person name="Pfiffner J."/>
            <person name="Priest M."/>
            <person name="Russ C."/>
            <person name="Smialowska A."/>
            <person name="Swoboda P."/>
            <person name="Sykes S.M."/>
            <person name="Vaughn M."/>
            <person name="Vengrova S."/>
            <person name="Yoder R."/>
            <person name="Zeng Q."/>
            <person name="Allshire R."/>
            <person name="Baulcombe D."/>
            <person name="Birren B.W."/>
            <person name="Brown W."/>
            <person name="Ekwall K."/>
            <person name="Kellis M."/>
            <person name="Leatherwood J."/>
            <person name="Levin H."/>
            <person name="Margalit H."/>
            <person name="Martienssen R."/>
            <person name="Nieduszynski C.A."/>
            <person name="Spatafora J.W."/>
            <person name="Friedman N."/>
            <person name="Dalgaard J.Z."/>
            <person name="Baumann P."/>
            <person name="Niki H."/>
            <person name="Regev A."/>
            <person name="Nusbaum C."/>
        </authorList>
    </citation>
    <scope>REVISION OF GENE MODEL</scope>
</reference>
<feature type="chain" id="PRO_0000416683" description="Putative uncharacterized transporter C977.04">
    <location>
        <begin position="1"/>
        <end position="155"/>
    </location>
</feature>
<feature type="transmembrane region" description="Helical" evidence="1">
    <location>
        <begin position="25"/>
        <end position="45"/>
    </location>
</feature>
<feature type="transmembrane region" description="Helical" evidence="1">
    <location>
        <begin position="50"/>
        <end position="70"/>
    </location>
</feature>
<feature type="transmembrane region" description="Helical" evidence="1">
    <location>
        <begin position="91"/>
        <end position="111"/>
    </location>
</feature>
<feature type="transmembrane region" description="Helical" evidence="1">
    <location>
        <begin position="118"/>
        <end position="138"/>
    </location>
</feature>
<proteinExistence type="uncertain"/>
<protein>
    <recommendedName>
        <fullName>Putative uncharacterized transporter C977.04</fullName>
    </recommendedName>
</protein>
<name>YI74_SCHPO</name>
<gene>
    <name type="ORF">SPAC977.04</name>
</gene>
<evidence type="ECO:0000255" key="1"/>
<evidence type="ECO:0000305" key="2"/>
<sequence>MPINQKFYSYLVKRNGGEGEPEFRLPMGFIGITLFEIGILLFGWTARYKIFWFVPTIGSAIMGGGYIMTSNPLNMYVVDSYGIYSASASAGVKIFQLLLGAIFPLFAESLFRRLNYGWGCTLLAFILLACGCSLPILFKYGKQIRNLRPFDPSKY</sequence>
<accession>G2TRN8</accession>